<organism>
    <name type="scientific">Dictyostelium discoideum</name>
    <name type="common">Social amoeba</name>
    <dbReference type="NCBI Taxonomy" id="44689"/>
    <lineage>
        <taxon>Eukaryota</taxon>
        <taxon>Amoebozoa</taxon>
        <taxon>Evosea</taxon>
        <taxon>Eumycetozoa</taxon>
        <taxon>Dictyostelia</taxon>
        <taxon>Dictyosteliales</taxon>
        <taxon>Dictyosteliaceae</taxon>
        <taxon>Dictyostelium</taxon>
    </lineage>
</organism>
<feature type="chain" id="PRO_0000416170" description="ATP-dependent (S)-NAD(P)H-hydrate dehydratase">
    <location>
        <begin position="1"/>
        <end position="306"/>
    </location>
</feature>
<feature type="domain" description="YjeF C-terminal" evidence="1">
    <location>
        <begin position="4"/>
        <end position="300"/>
    </location>
</feature>
<feature type="binding site" evidence="1">
    <location>
        <position position="104"/>
    </location>
    <ligand>
        <name>(6S)-NADPHX</name>
        <dbReference type="ChEBI" id="CHEBI:64076"/>
    </ligand>
</feature>
<feature type="binding site" evidence="1">
    <location>
        <begin position="157"/>
        <end position="163"/>
    </location>
    <ligand>
        <name>(6S)-NADPHX</name>
        <dbReference type="ChEBI" id="CHEBI:64076"/>
    </ligand>
</feature>
<feature type="binding site" evidence="1">
    <location>
        <begin position="197"/>
        <end position="201"/>
    </location>
    <ligand>
        <name>ATP</name>
        <dbReference type="ChEBI" id="CHEBI:30616"/>
    </ligand>
</feature>
<feature type="binding site" evidence="1">
    <location>
        <begin position="216"/>
        <end position="225"/>
    </location>
    <ligand>
        <name>ATP</name>
        <dbReference type="ChEBI" id="CHEBI:30616"/>
    </ligand>
</feature>
<feature type="binding site" evidence="1">
    <location>
        <position position="226"/>
    </location>
    <ligand>
        <name>(6S)-NADPHX</name>
        <dbReference type="ChEBI" id="CHEBI:64076"/>
    </ligand>
</feature>
<gene>
    <name type="ORF">DDB_G0290799</name>
</gene>
<protein>
    <recommendedName>
        <fullName evidence="1">ATP-dependent (S)-NAD(P)H-hydrate dehydratase</fullName>
        <ecNumber evidence="1">4.2.1.93</ecNumber>
    </recommendedName>
    <alternativeName>
        <fullName evidence="1">ATP-dependent NAD(P)HX dehydratase</fullName>
    </alternativeName>
</protein>
<evidence type="ECO:0000255" key="1">
    <source>
        <dbReference type="HAMAP-Rule" id="MF_03157"/>
    </source>
</evidence>
<dbReference type="EC" id="4.2.1.93" evidence="1"/>
<dbReference type="EMBL" id="AAFI02000171">
    <property type="protein sequence ID" value="EAL62033.1"/>
    <property type="molecule type" value="Genomic_DNA"/>
</dbReference>
<dbReference type="RefSeq" id="XP_635541.1">
    <property type="nucleotide sequence ID" value="XM_630449.1"/>
</dbReference>
<dbReference type="SMR" id="Q54FJ9"/>
<dbReference type="FunCoup" id="Q54FJ9">
    <property type="interactions" value="7"/>
</dbReference>
<dbReference type="STRING" id="44689.Q54FJ9"/>
<dbReference type="PaxDb" id="44689-DDB0267138"/>
<dbReference type="EnsemblProtists" id="EAL62033">
    <property type="protein sequence ID" value="EAL62033"/>
    <property type="gene ID" value="DDB_G0290799"/>
</dbReference>
<dbReference type="GeneID" id="8627839"/>
<dbReference type="KEGG" id="ddi:DDB_G0290799"/>
<dbReference type="dictyBase" id="DDB_G0290799"/>
<dbReference type="VEuPathDB" id="AmoebaDB:DDB_G0290799"/>
<dbReference type="eggNOG" id="KOG3974">
    <property type="taxonomic scope" value="Eukaryota"/>
</dbReference>
<dbReference type="HOGENOM" id="CLU_030651_3_0_1"/>
<dbReference type="InParanoid" id="Q54FJ9"/>
<dbReference type="OMA" id="WRAAYHN"/>
<dbReference type="PhylomeDB" id="Q54FJ9"/>
<dbReference type="Reactome" id="R-DDI-197264">
    <property type="pathway name" value="Nicotinamide salvaging"/>
</dbReference>
<dbReference type="PRO" id="PR:Q54FJ9"/>
<dbReference type="Proteomes" id="UP000002195">
    <property type="component" value="Chromosome 5"/>
</dbReference>
<dbReference type="GO" id="GO:0005524">
    <property type="term" value="F:ATP binding"/>
    <property type="evidence" value="ECO:0007669"/>
    <property type="project" value="UniProtKB-KW"/>
</dbReference>
<dbReference type="GO" id="GO:0047453">
    <property type="term" value="F:ATP-dependent NAD(P)H-hydrate dehydratase activity"/>
    <property type="evidence" value="ECO:0000318"/>
    <property type="project" value="GO_Central"/>
</dbReference>
<dbReference type="GO" id="GO:0110051">
    <property type="term" value="P:metabolite repair"/>
    <property type="evidence" value="ECO:0000318"/>
    <property type="project" value="GO_Central"/>
</dbReference>
<dbReference type="GO" id="GO:0046496">
    <property type="term" value="P:nicotinamide nucleotide metabolic process"/>
    <property type="evidence" value="ECO:0007669"/>
    <property type="project" value="UniProtKB-UniRule"/>
</dbReference>
<dbReference type="CDD" id="cd01171">
    <property type="entry name" value="YXKO-related"/>
    <property type="match status" value="1"/>
</dbReference>
<dbReference type="FunFam" id="3.40.1190.20:FF:000091">
    <property type="entry name" value="ATP-dependent (S)-NAD(P)H-hydrate dehydratase"/>
    <property type="match status" value="1"/>
</dbReference>
<dbReference type="Gene3D" id="3.40.1190.20">
    <property type="match status" value="1"/>
</dbReference>
<dbReference type="HAMAP" id="MF_01965">
    <property type="entry name" value="NADHX_dehydratase"/>
    <property type="match status" value="1"/>
</dbReference>
<dbReference type="InterPro" id="IPR000631">
    <property type="entry name" value="CARKD"/>
</dbReference>
<dbReference type="InterPro" id="IPR029056">
    <property type="entry name" value="Ribokinase-like"/>
</dbReference>
<dbReference type="NCBIfam" id="TIGR00196">
    <property type="entry name" value="yjeF_cterm"/>
    <property type="match status" value="1"/>
</dbReference>
<dbReference type="PANTHER" id="PTHR12592:SF0">
    <property type="entry name" value="ATP-DEPENDENT (S)-NAD(P)H-HYDRATE DEHYDRATASE"/>
    <property type="match status" value="1"/>
</dbReference>
<dbReference type="PANTHER" id="PTHR12592">
    <property type="entry name" value="ATP-DEPENDENT (S)-NAD(P)H-HYDRATE DEHYDRATASE FAMILY MEMBER"/>
    <property type="match status" value="1"/>
</dbReference>
<dbReference type="Pfam" id="PF01256">
    <property type="entry name" value="Carb_kinase"/>
    <property type="match status" value="1"/>
</dbReference>
<dbReference type="SUPFAM" id="SSF53613">
    <property type="entry name" value="Ribokinase-like"/>
    <property type="match status" value="1"/>
</dbReference>
<dbReference type="PROSITE" id="PS51383">
    <property type="entry name" value="YJEF_C_3"/>
    <property type="match status" value="1"/>
</dbReference>
<sequence length="306" mass="33168">MTHLIDLFKPMIPSLLNNLHKGQSGRIAIMGGSKEYTGAPFFSGISSLKIGSDICHIFAPTEGGTATALKTMSPDLIVHPIEKNDPSDIIPWLLSLHVIVVGPGLGRSSGAWSCASEVIKAARNINLPIVLDGDALRLICDNLDIIKGYDKAILTPNFVEFKSLSDSVKKMIGDTSNNLLKPEHIASCLGNITIVQKGKEDIITDGNQTVVCDDEGMPRRCGGQGDILAGTVGTMYAWSQLYYKYNSNTDDKPEYPISIISAYAACSLLRHCSKKAYQISKRSTVSMDIINQISNGFEDLFPESSK</sequence>
<reference key="1">
    <citation type="journal article" date="2005" name="Nature">
        <title>The genome of the social amoeba Dictyostelium discoideum.</title>
        <authorList>
            <person name="Eichinger L."/>
            <person name="Pachebat J.A."/>
            <person name="Gloeckner G."/>
            <person name="Rajandream M.A."/>
            <person name="Sucgang R."/>
            <person name="Berriman M."/>
            <person name="Song J."/>
            <person name="Olsen R."/>
            <person name="Szafranski K."/>
            <person name="Xu Q."/>
            <person name="Tunggal B."/>
            <person name="Kummerfeld S."/>
            <person name="Madera M."/>
            <person name="Konfortov B.A."/>
            <person name="Rivero F."/>
            <person name="Bankier A.T."/>
            <person name="Lehmann R."/>
            <person name="Hamlin N."/>
            <person name="Davies R."/>
            <person name="Gaudet P."/>
            <person name="Fey P."/>
            <person name="Pilcher K."/>
            <person name="Chen G."/>
            <person name="Saunders D."/>
            <person name="Sodergren E.J."/>
            <person name="Davis P."/>
            <person name="Kerhornou A."/>
            <person name="Nie X."/>
            <person name="Hall N."/>
            <person name="Anjard C."/>
            <person name="Hemphill L."/>
            <person name="Bason N."/>
            <person name="Farbrother P."/>
            <person name="Desany B."/>
            <person name="Just E."/>
            <person name="Morio T."/>
            <person name="Rost R."/>
            <person name="Churcher C.M."/>
            <person name="Cooper J."/>
            <person name="Haydock S."/>
            <person name="van Driessche N."/>
            <person name="Cronin A."/>
            <person name="Goodhead I."/>
            <person name="Muzny D.M."/>
            <person name="Mourier T."/>
            <person name="Pain A."/>
            <person name="Lu M."/>
            <person name="Harper D."/>
            <person name="Lindsay R."/>
            <person name="Hauser H."/>
            <person name="James K.D."/>
            <person name="Quiles M."/>
            <person name="Madan Babu M."/>
            <person name="Saito T."/>
            <person name="Buchrieser C."/>
            <person name="Wardroper A."/>
            <person name="Felder M."/>
            <person name="Thangavelu M."/>
            <person name="Johnson D."/>
            <person name="Knights A."/>
            <person name="Loulseged H."/>
            <person name="Mungall K.L."/>
            <person name="Oliver K."/>
            <person name="Price C."/>
            <person name="Quail M.A."/>
            <person name="Urushihara H."/>
            <person name="Hernandez J."/>
            <person name="Rabbinowitsch E."/>
            <person name="Steffen D."/>
            <person name="Sanders M."/>
            <person name="Ma J."/>
            <person name="Kohara Y."/>
            <person name="Sharp S."/>
            <person name="Simmonds M.N."/>
            <person name="Spiegler S."/>
            <person name="Tivey A."/>
            <person name="Sugano S."/>
            <person name="White B."/>
            <person name="Walker D."/>
            <person name="Woodward J.R."/>
            <person name="Winckler T."/>
            <person name="Tanaka Y."/>
            <person name="Shaulsky G."/>
            <person name="Schleicher M."/>
            <person name="Weinstock G.M."/>
            <person name="Rosenthal A."/>
            <person name="Cox E.C."/>
            <person name="Chisholm R.L."/>
            <person name="Gibbs R.A."/>
            <person name="Loomis W.F."/>
            <person name="Platzer M."/>
            <person name="Kay R.R."/>
            <person name="Williams J.G."/>
            <person name="Dear P.H."/>
            <person name="Noegel A.A."/>
            <person name="Barrell B.G."/>
            <person name="Kuspa A."/>
        </authorList>
    </citation>
    <scope>NUCLEOTIDE SEQUENCE [LARGE SCALE GENOMIC DNA]</scope>
    <source>
        <strain>AX4</strain>
    </source>
</reference>
<keyword id="KW-0067">ATP-binding</keyword>
<keyword id="KW-0456">Lyase</keyword>
<keyword id="KW-0520">NAD</keyword>
<keyword id="KW-0521">NADP</keyword>
<keyword id="KW-0547">Nucleotide-binding</keyword>
<keyword id="KW-0597">Phosphoprotein</keyword>
<keyword id="KW-1185">Reference proteome</keyword>
<proteinExistence type="inferred from homology"/>
<accession>Q54FJ9</accession>
<comment type="function">
    <text evidence="1">Catalyzes the dehydration of the S-form of NAD(P)HX at the expense of ATP, which is converted to ADP. Together with NAD(P)HX epimerase, which catalyzes the epimerization of the S- and R-forms, the enzyme allows the repair of both epimers of NAD(P)HX, a damaged form of NAD(P)H that is a result of enzymatic or heat-dependent hydration.</text>
</comment>
<comment type="catalytic activity">
    <reaction evidence="1">
        <text>(6S)-NADHX + ATP = ADP + phosphate + NADH + H(+)</text>
        <dbReference type="Rhea" id="RHEA:19017"/>
        <dbReference type="ChEBI" id="CHEBI:15378"/>
        <dbReference type="ChEBI" id="CHEBI:30616"/>
        <dbReference type="ChEBI" id="CHEBI:43474"/>
        <dbReference type="ChEBI" id="CHEBI:57945"/>
        <dbReference type="ChEBI" id="CHEBI:64074"/>
        <dbReference type="ChEBI" id="CHEBI:456216"/>
        <dbReference type="EC" id="4.2.1.93"/>
    </reaction>
</comment>
<comment type="catalytic activity">
    <reaction>
        <text>(6S)-NADPHX + ATP = ADP + phosphate + NADPH + H(+)</text>
        <dbReference type="Rhea" id="RHEA:32231"/>
        <dbReference type="ChEBI" id="CHEBI:15378"/>
        <dbReference type="ChEBI" id="CHEBI:30616"/>
        <dbReference type="ChEBI" id="CHEBI:43474"/>
        <dbReference type="ChEBI" id="CHEBI:57783"/>
        <dbReference type="ChEBI" id="CHEBI:64076"/>
        <dbReference type="ChEBI" id="CHEBI:456216"/>
        <dbReference type="EC" id="4.2.1.93"/>
    </reaction>
</comment>
<comment type="cofactor">
    <cofactor evidence="1">
        <name>Mg(2+)</name>
        <dbReference type="ChEBI" id="CHEBI:18420"/>
    </cofactor>
</comment>
<comment type="similarity">
    <text evidence="1">Belongs to the NnrD/CARKD family.</text>
</comment>
<name>NNRD_DICDI</name>